<sequence length="92" mass="10430">MPRSLKKGPFIDLHLLKKVEKAVESGDKKPLRTWSRRSTIFPNMIGLTIAVHNGRQHVPVFVTDEMVGHKLGEFAPTRTYRGHAADKKAKKK</sequence>
<comment type="function">
    <text evidence="1">Protein S19 forms a complex with S13 that binds strongly to the 16S ribosomal RNA.</text>
</comment>
<comment type="similarity">
    <text evidence="1">Belongs to the universal ribosomal protein uS19 family.</text>
</comment>
<protein>
    <recommendedName>
        <fullName evidence="1">Small ribosomal subunit protein uS19</fullName>
    </recommendedName>
    <alternativeName>
        <fullName evidence="2">30S ribosomal protein S19</fullName>
    </alternativeName>
</protein>
<keyword id="KW-1185">Reference proteome</keyword>
<keyword id="KW-0687">Ribonucleoprotein</keyword>
<keyword id="KW-0689">Ribosomal protein</keyword>
<keyword id="KW-0694">RNA-binding</keyword>
<keyword id="KW-0699">rRNA-binding</keyword>
<name>RS19_SHIDS</name>
<dbReference type="EMBL" id="CP000034">
    <property type="protein sequence ID" value="ABB63470.1"/>
    <property type="molecule type" value="Genomic_DNA"/>
</dbReference>
<dbReference type="RefSeq" id="WP_001138117.1">
    <property type="nucleotide sequence ID" value="NC_007606.1"/>
</dbReference>
<dbReference type="RefSeq" id="YP_404961.1">
    <property type="nucleotide sequence ID" value="NC_007606.1"/>
</dbReference>
<dbReference type="SMR" id="Q32B35"/>
<dbReference type="STRING" id="300267.SDY_3492"/>
<dbReference type="EnsemblBacteria" id="ABB63470">
    <property type="protein sequence ID" value="ABB63470"/>
    <property type="gene ID" value="SDY_3492"/>
</dbReference>
<dbReference type="GeneID" id="98390438"/>
<dbReference type="KEGG" id="sdy:SDY_3492"/>
<dbReference type="PATRIC" id="fig|300267.13.peg.4145"/>
<dbReference type="HOGENOM" id="CLU_144911_0_1_6"/>
<dbReference type="Proteomes" id="UP000002716">
    <property type="component" value="Chromosome"/>
</dbReference>
<dbReference type="GO" id="GO:0005737">
    <property type="term" value="C:cytoplasm"/>
    <property type="evidence" value="ECO:0007669"/>
    <property type="project" value="UniProtKB-ARBA"/>
</dbReference>
<dbReference type="GO" id="GO:0015935">
    <property type="term" value="C:small ribosomal subunit"/>
    <property type="evidence" value="ECO:0007669"/>
    <property type="project" value="InterPro"/>
</dbReference>
<dbReference type="GO" id="GO:0019843">
    <property type="term" value="F:rRNA binding"/>
    <property type="evidence" value="ECO:0007669"/>
    <property type="project" value="UniProtKB-UniRule"/>
</dbReference>
<dbReference type="GO" id="GO:0003735">
    <property type="term" value="F:structural constituent of ribosome"/>
    <property type="evidence" value="ECO:0007669"/>
    <property type="project" value="InterPro"/>
</dbReference>
<dbReference type="GO" id="GO:0000028">
    <property type="term" value="P:ribosomal small subunit assembly"/>
    <property type="evidence" value="ECO:0007669"/>
    <property type="project" value="TreeGrafter"/>
</dbReference>
<dbReference type="GO" id="GO:0006412">
    <property type="term" value="P:translation"/>
    <property type="evidence" value="ECO:0007669"/>
    <property type="project" value="UniProtKB-UniRule"/>
</dbReference>
<dbReference type="FunFam" id="3.30.860.10:FF:000001">
    <property type="entry name" value="30S ribosomal protein S19"/>
    <property type="match status" value="1"/>
</dbReference>
<dbReference type="Gene3D" id="3.30.860.10">
    <property type="entry name" value="30s Ribosomal Protein S19, Chain A"/>
    <property type="match status" value="1"/>
</dbReference>
<dbReference type="HAMAP" id="MF_00531">
    <property type="entry name" value="Ribosomal_uS19"/>
    <property type="match status" value="1"/>
</dbReference>
<dbReference type="InterPro" id="IPR002222">
    <property type="entry name" value="Ribosomal_uS19"/>
</dbReference>
<dbReference type="InterPro" id="IPR005732">
    <property type="entry name" value="Ribosomal_uS19_bac-type"/>
</dbReference>
<dbReference type="InterPro" id="IPR020934">
    <property type="entry name" value="Ribosomal_uS19_CS"/>
</dbReference>
<dbReference type="InterPro" id="IPR023575">
    <property type="entry name" value="Ribosomal_uS19_SF"/>
</dbReference>
<dbReference type="NCBIfam" id="TIGR01050">
    <property type="entry name" value="rpsS_bact"/>
    <property type="match status" value="1"/>
</dbReference>
<dbReference type="PANTHER" id="PTHR11880">
    <property type="entry name" value="RIBOSOMAL PROTEIN S19P FAMILY MEMBER"/>
    <property type="match status" value="1"/>
</dbReference>
<dbReference type="PANTHER" id="PTHR11880:SF8">
    <property type="entry name" value="SMALL RIBOSOMAL SUBUNIT PROTEIN US19M"/>
    <property type="match status" value="1"/>
</dbReference>
<dbReference type="Pfam" id="PF00203">
    <property type="entry name" value="Ribosomal_S19"/>
    <property type="match status" value="1"/>
</dbReference>
<dbReference type="PIRSF" id="PIRSF002144">
    <property type="entry name" value="Ribosomal_S19"/>
    <property type="match status" value="1"/>
</dbReference>
<dbReference type="PRINTS" id="PR00975">
    <property type="entry name" value="RIBOSOMALS19"/>
</dbReference>
<dbReference type="SUPFAM" id="SSF54570">
    <property type="entry name" value="Ribosomal protein S19"/>
    <property type="match status" value="1"/>
</dbReference>
<dbReference type="PROSITE" id="PS00323">
    <property type="entry name" value="RIBOSOMAL_S19"/>
    <property type="match status" value="1"/>
</dbReference>
<gene>
    <name evidence="1" type="primary">rpsS</name>
    <name type="ordered locus">SDY_3492</name>
</gene>
<accession>Q32B35</accession>
<evidence type="ECO:0000255" key="1">
    <source>
        <dbReference type="HAMAP-Rule" id="MF_00531"/>
    </source>
</evidence>
<evidence type="ECO:0000305" key="2"/>
<organism>
    <name type="scientific">Shigella dysenteriae serotype 1 (strain Sd197)</name>
    <dbReference type="NCBI Taxonomy" id="300267"/>
    <lineage>
        <taxon>Bacteria</taxon>
        <taxon>Pseudomonadati</taxon>
        <taxon>Pseudomonadota</taxon>
        <taxon>Gammaproteobacteria</taxon>
        <taxon>Enterobacterales</taxon>
        <taxon>Enterobacteriaceae</taxon>
        <taxon>Shigella</taxon>
    </lineage>
</organism>
<feature type="chain" id="PRO_0000265432" description="Small ribosomal subunit protein uS19">
    <location>
        <begin position="1"/>
        <end position="92"/>
    </location>
</feature>
<proteinExistence type="inferred from homology"/>
<reference key="1">
    <citation type="journal article" date="2005" name="Nucleic Acids Res.">
        <title>Genome dynamics and diversity of Shigella species, the etiologic agents of bacillary dysentery.</title>
        <authorList>
            <person name="Yang F."/>
            <person name="Yang J."/>
            <person name="Zhang X."/>
            <person name="Chen L."/>
            <person name="Jiang Y."/>
            <person name="Yan Y."/>
            <person name="Tang X."/>
            <person name="Wang J."/>
            <person name="Xiong Z."/>
            <person name="Dong J."/>
            <person name="Xue Y."/>
            <person name="Zhu Y."/>
            <person name="Xu X."/>
            <person name="Sun L."/>
            <person name="Chen S."/>
            <person name="Nie H."/>
            <person name="Peng J."/>
            <person name="Xu J."/>
            <person name="Wang Y."/>
            <person name="Yuan Z."/>
            <person name="Wen Y."/>
            <person name="Yao Z."/>
            <person name="Shen Y."/>
            <person name="Qiang B."/>
            <person name="Hou Y."/>
            <person name="Yu J."/>
            <person name="Jin Q."/>
        </authorList>
    </citation>
    <scope>NUCLEOTIDE SEQUENCE [LARGE SCALE GENOMIC DNA]</scope>
    <source>
        <strain>Sd197</strain>
    </source>
</reference>